<dbReference type="EMBL" id="AL391222">
    <property type="protein sequence ID" value="CAC03452.1"/>
    <property type="molecule type" value="Genomic_DNA"/>
</dbReference>
<dbReference type="EMBL" id="CP002688">
    <property type="protein sequence ID" value="AED91628.1"/>
    <property type="molecule type" value="Genomic_DNA"/>
</dbReference>
<dbReference type="EMBL" id="BT008594">
    <property type="status" value="NOT_ANNOTATED_CDS"/>
    <property type="molecule type" value="mRNA"/>
</dbReference>
<dbReference type="PIR" id="T51793">
    <property type="entry name" value="T51793"/>
</dbReference>
<dbReference type="RefSeq" id="NP_196665.1">
    <property type="nucleotide sequence ID" value="NM_121142.3"/>
</dbReference>
<dbReference type="FunCoup" id="Q9FY61">
    <property type="interactions" value="4423"/>
</dbReference>
<dbReference type="STRING" id="3702.Q9FY61"/>
<dbReference type="GlyGen" id="Q9FY61">
    <property type="glycosylation" value="1 site"/>
</dbReference>
<dbReference type="iPTMnet" id="Q9FY61"/>
<dbReference type="PaxDb" id="3702-AT5G11040.1"/>
<dbReference type="ProteomicsDB" id="234339"/>
<dbReference type="EnsemblPlants" id="AT5G11040.1">
    <property type="protein sequence ID" value="AT5G11040.1"/>
    <property type="gene ID" value="AT5G11040"/>
</dbReference>
<dbReference type="GeneID" id="830971"/>
<dbReference type="Gramene" id="AT5G11040.1">
    <property type="protein sequence ID" value="AT5G11040.1"/>
    <property type="gene ID" value="AT5G11040"/>
</dbReference>
<dbReference type="KEGG" id="ath:AT5G11040"/>
<dbReference type="Araport" id="AT5G11040"/>
<dbReference type="TAIR" id="AT5G11040">
    <property type="gene designation" value="TRS120"/>
</dbReference>
<dbReference type="eggNOG" id="KOG1953">
    <property type="taxonomic scope" value="Eukaryota"/>
</dbReference>
<dbReference type="HOGENOM" id="CLU_001678_0_0_1"/>
<dbReference type="InParanoid" id="Q9FY61"/>
<dbReference type="OMA" id="PFANQPW"/>
<dbReference type="PhylomeDB" id="Q9FY61"/>
<dbReference type="PRO" id="PR:Q9FY61"/>
<dbReference type="Proteomes" id="UP000006548">
    <property type="component" value="Chromosome 5"/>
</dbReference>
<dbReference type="ExpressionAtlas" id="Q9FY61">
    <property type="expression patterns" value="baseline and differential"/>
</dbReference>
<dbReference type="GO" id="GO:0005769">
    <property type="term" value="C:early endosome"/>
    <property type="evidence" value="ECO:0000314"/>
    <property type="project" value="UniProtKB"/>
</dbReference>
<dbReference type="GO" id="GO:0005886">
    <property type="term" value="C:plasma membrane"/>
    <property type="evidence" value="ECO:0007005"/>
    <property type="project" value="TAIR"/>
</dbReference>
<dbReference type="GO" id="GO:0005802">
    <property type="term" value="C:trans-Golgi network"/>
    <property type="evidence" value="ECO:0000314"/>
    <property type="project" value="UniProtKB"/>
</dbReference>
<dbReference type="GO" id="GO:0000919">
    <property type="term" value="P:cell plate assembly"/>
    <property type="evidence" value="ECO:0000315"/>
    <property type="project" value="TAIR"/>
</dbReference>
<dbReference type="GO" id="GO:0000911">
    <property type="term" value="P:cytokinesis by cell plate formation"/>
    <property type="evidence" value="ECO:0000315"/>
    <property type="project" value="TAIR"/>
</dbReference>
<dbReference type="InterPro" id="IPR013935">
    <property type="entry name" value="TRAPP_II_complex_Trs120"/>
</dbReference>
<dbReference type="PANTHER" id="PTHR21512">
    <property type="entry name" value="TRAFFICKING PROTEIN PARTICLE COMPLEX SUBUNIT 9"/>
    <property type="match status" value="1"/>
</dbReference>
<dbReference type="PANTHER" id="PTHR21512:SF5">
    <property type="entry name" value="TRAFFICKING PROTEIN PARTICLE COMPLEX SUBUNIT 9"/>
    <property type="match status" value="1"/>
</dbReference>
<dbReference type="Pfam" id="PF08626">
    <property type="entry name" value="TRAPPC9-Trs120"/>
    <property type="match status" value="3"/>
</dbReference>
<name>TR120_ARATH</name>
<keyword id="KW-0967">Endosome</keyword>
<keyword id="KW-0333">Golgi apparatus</keyword>
<keyword id="KW-0597">Phosphoprotein</keyword>
<keyword id="KW-1185">Reference proteome</keyword>
<keyword id="KW-0813">Transport</keyword>
<organism>
    <name type="scientific">Arabidopsis thaliana</name>
    <name type="common">Mouse-ear cress</name>
    <dbReference type="NCBI Taxonomy" id="3702"/>
    <lineage>
        <taxon>Eukaryota</taxon>
        <taxon>Viridiplantae</taxon>
        <taxon>Streptophyta</taxon>
        <taxon>Embryophyta</taxon>
        <taxon>Tracheophyta</taxon>
        <taxon>Spermatophyta</taxon>
        <taxon>Magnoliopsida</taxon>
        <taxon>eudicotyledons</taxon>
        <taxon>Gunneridae</taxon>
        <taxon>Pentapetalae</taxon>
        <taxon>rosids</taxon>
        <taxon>malvids</taxon>
        <taxon>Brassicales</taxon>
        <taxon>Brassicaceae</taxon>
        <taxon>Camelineae</taxon>
        <taxon>Arabidopsis</taxon>
    </lineage>
</organism>
<sequence length="1186" mass="129595">MEPDVSIETLSIIRIAVLPIGTIPPTLLRDYHSMLLRHHTIALSAISSFYTEHQKSPFTNQPWDSGSLRFKFVLGGSPPSPWEDFQSNRKMLAVIGLCHCPSSPDLDSVTEKFNVACKSYSSALVRRCFAFSPGDSQLEDGDKKGENLILFPPSDKQTQEFHLQTMMQDIAASLLMEFEKWVLQAESAGTILKTPLDSQASLNSEEVIKAKKRRLGRAQKTIGDYSLLAGSPVDANAHYSTALELARLTGDYFWYAGALEGSVCALLVDRMGQRDVALEDEVRYRYTNVILHYRKSFIQEIAQRVSPLSFELEATLKLARFLCRRELAKEVVELLTNAADGAKSLIDASDRLILYVEVARLFGALGYQRKAAFFCRQVAQLYLQQDNRLAAISAMQVLSMTTDAYRIQSRASMSKVSVNNETGRLPDAGKMHHHSIVSLFESHWSTLQMVVLREILLSAVRAGDPLAAWSAAARLLRWHYPLITPSGQNGLANSLANSADRLPSGTRCADPALPFVRLFSFPLHSSQVDIVKRNPAREDWWTGSAPSGPFIYTPFSKGDANESSKQELIWVVGEPVQVLVELANPCCFDLRIDSIYLSAHSSNFDAFPVSVDIPPNSAKVITLSGIPTAVGPVTIPGCTVHCFGVITEHVFRDVDNLLLGAAQGLVFSDPFRSCGSAKLRHVFVPNISVAPPLPLLVANVVGGDGAIILYEGEIREVCINFANAGTVPIVQAHVSLSGKNQDAVISIADEALQSALPLKPGAQVTLPVTLKAWHVGPTDSDNTMSSGRNAAGNTGRPKDGTSPSLLIHYAGPLSNNGDSQEKESIVPPGRRLVVPLQICVLQGLSFVKARLLSMEIPAHVSDNLRDEDIERESNADSLVKINPFRGSWGLRFLELELSNPTDVVFEISVFVQLENSAKEDDSSPVQDSPEYEYPKTRIDRDYSARVLIPLEHFKLPVLDGSFFTKDPPPGSPSSSRNPSFSEKNTKAEINTLIKNLISKIKVRWQSGRNSSGELDIKDAIQTALQTTVMDVLLPDPLTFGFRLVRNGLEKDPETKAESPFSKGSVLSHEVTPMEVLVRNNTSEAIKLNLSVTCRDVAGQNCTEGADATVLWAGALSGISMEVAPLQEARHCFSLFFLVPGEYTMVAAAVIEDANNVLRARAGTASPNEPIFCRGPPFHVCVAGGAL</sequence>
<proteinExistence type="evidence at protein level"/>
<comment type="function">
    <text evidence="2 3 4">Specific subunit of the TRAPP II complex, a highly conserved vesicle tethering complex that is required for the proper transport of proteins in post-Golgi trafficking pathways to the growing cell plate in mitotic active cells (PubMed:20713617, PubMed:21689172, PubMed:24443495). Required for the polarized and selective transport of PIN2 and probably PIN1 to the plasma membrane (PubMed:21689172, PubMed:24443495). Not required for ER-to-Golgi as well as biosynthetic and endocytic vacuolar transport (PubMed:21689172).</text>
</comment>
<comment type="subunit">
    <text evidence="5">Part of the multisubunit TRAPP (transport protein particle) II complex composed of BET3, BET5, TRS20, TRS23, TRS31, TRS33, TRS65, TRS85, TRS120 and TRS130.</text>
</comment>
<comment type="subcellular location">
    <subcellularLocation>
        <location evidence="4">Golgi apparatus</location>
        <location evidence="4">trans-Golgi network</location>
    </subcellularLocation>
    <subcellularLocation>
        <location evidence="4">Early endosome</location>
    </subcellularLocation>
</comment>
<comment type="tissue specificity">
    <text evidence="4">Expressed in roots, leaves, stems and flowers.</text>
</comment>
<comment type="disruption phenotype">
    <text evidence="2">Cytokinesis-defective and seedling-lethal phenotype.</text>
</comment>
<comment type="similarity">
    <text evidence="7">Belongs to the TRS120 family.</text>
</comment>
<evidence type="ECO:0000256" key="1">
    <source>
        <dbReference type="SAM" id="MobiDB-lite"/>
    </source>
</evidence>
<evidence type="ECO:0000269" key="2">
    <source>
    </source>
</evidence>
<evidence type="ECO:0000269" key="3">
    <source>
    </source>
</evidence>
<evidence type="ECO:0000269" key="4">
    <source>
    </source>
</evidence>
<evidence type="ECO:0000303" key="5">
    <source>
    </source>
</evidence>
<evidence type="ECO:0000303" key="6">
    <source>
    </source>
</evidence>
<evidence type="ECO:0000305" key="7"/>
<evidence type="ECO:0000312" key="8">
    <source>
        <dbReference type="Araport" id="AT5G11040"/>
    </source>
</evidence>
<evidence type="ECO:0000312" key="9">
    <source>
        <dbReference type="EMBL" id="CAC03452.1"/>
    </source>
</evidence>
<evidence type="ECO:0007744" key="10">
    <source>
    </source>
</evidence>
<feature type="chain" id="PRO_0000431448" description="Trafficking protein particle complex II-specific subunit 120 homolog">
    <location>
        <begin position="1"/>
        <end position="1186"/>
    </location>
</feature>
<feature type="region of interest" description="Disordered" evidence="1">
    <location>
        <begin position="777"/>
        <end position="824"/>
    </location>
</feature>
<feature type="region of interest" description="Disordered" evidence="1">
    <location>
        <begin position="964"/>
        <end position="984"/>
    </location>
</feature>
<feature type="compositionally biased region" description="Polar residues" evidence="1">
    <location>
        <begin position="779"/>
        <end position="792"/>
    </location>
</feature>
<feature type="compositionally biased region" description="Low complexity" evidence="1">
    <location>
        <begin position="972"/>
        <end position="981"/>
    </location>
</feature>
<feature type="modified residue" description="Phosphoserine" evidence="10">
    <location>
        <position position="971"/>
    </location>
</feature>
<accession>Q9FY61</accession>
<protein>
    <recommendedName>
        <fullName evidence="7">Trafficking protein particle complex II-specific subunit 120 homolog</fullName>
        <shortName evidence="5">AtTRS120</shortName>
        <shortName evidence="7">TRAPP II-specific subunit 120 homolog</shortName>
    </recommendedName>
    <alternativeName>
        <fullName evidence="6">Protein VASCULAR NETWORK DEFECTIVE 4</fullName>
    </alternativeName>
</protein>
<gene>
    <name evidence="5" type="primary">TRS120</name>
    <name evidence="6" type="synonym">VAN4</name>
    <name evidence="8" type="ordered locus">At5g11040</name>
    <name evidence="9" type="ORF">T5K6.30</name>
</gene>
<reference key="1">
    <citation type="journal article" date="2000" name="Nature">
        <title>Sequence and analysis of chromosome 5 of the plant Arabidopsis thaliana.</title>
        <authorList>
            <person name="Tabata S."/>
            <person name="Kaneko T."/>
            <person name="Nakamura Y."/>
            <person name="Kotani H."/>
            <person name="Kato T."/>
            <person name="Asamizu E."/>
            <person name="Miyajima N."/>
            <person name="Sasamoto S."/>
            <person name="Kimura T."/>
            <person name="Hosouchi T."/>
            <person name="Kawashima K."/>
            <person name="Kohara M."/>
            <person name="Matsumoto M."/>
            <person name="Matsuno A."/>
            <person name="Muraki A."/>
            <person name="Nakayama S."/>
            <person name="Nakazaki N."/>
            <person name="Naruo K."/>
            <person name="Okumura S."/>
            <person name="Shinpo S."/>
            <person name="Takeuchi C."/>
            <person name="Wada T."/>
            <person name="Watanabe A."/>
            <person name="Yamada M."/>
            <person name="Yasuda M."/>
            <person name="Sato S."/>
            <person name="de la Bastide M."/>
            <person name="Huang E."/>
            <person name="Spiegel L."/>
            <person name="Gnoj L."/>
            <person name="O'Shaughnessy A."/>
            <person name="Preston R."/>
            <person name="Habermann K."/>
            <person name="Murray J."/>
            <person name="Johnson D."/>
            <person name="Rohlfing T."/>
            <person name="Nelson J."/>
            <person name="Stoneking T."/>
            <person name="Pepin K."/>
            <person name="Spieth J."/>
            <person name="Sekhon M."/>
            <person name="Armstrong J."/>
            <person name="Becker M."/>
            <person name="Belter E."/>
            <person name="Cordum H."/>
            <person name="Cordes M."/>
            <person name="Courtney L."/>
            <person name="Courtney W."/>
            <person name="Dante M."/>
            <person name="Du H."/>
            <person name="Edwards J."/>
            <person name="Fryman J."/>
            <person name="Haakensen B."/>
            <person name="Lamar E."/>
            <person name="Latreille P."/>
            <person name="Leonard S."/>
            <person name="Meyer R."/>
            <person name="Mulvaney E."/>
            <person name="Ozersky P."/>
            <person name="Riley A."/>
            <person name="Strowmatt C."/>
            <person name="Wagner-McPherson C."/>
            <person name="Wollam A."/>
            <person name="Yoakum M."/>
            <person name="Bell M."/>
            <person name="Dedhia N."/>
            <person name="Parnell L."/>
            <person name="Shah R."/>
            <person name="Rodriguez M."/>
            <person name="Hoon See L."/>
            <person name="Vil D."/>
            <person name="Baker J."/>
            <person name="Kirchoff K."/>
            <person name="Toth K."/>
            <person name="King L."/>
            <person name="Bahret A."/>
            <person name="Miller B."/>
            <person name="Marra M.A."/>
            <person name="Martienssen R."/>
            <person name="McCombie W.R."/>
            <person name="Wilson R.K."/>
            <person name="Murphy G."/>
            <person name="Bancroft I."/>
            <person name="Volckaert G."/>
            <person name="Wambutt R."/>
            <person name="Duesterhoeft A."/>
            <person name="Stiekema W."/>
            <person name="Pohl T."/>
            <person name="Entian K.-D."/>
            <person name="Terryn N."/>
            <person name="Hartley N."/>
            <person name="Bent E."/>
            <person name="Johnson S."/>
            <person name="Langham S.-A."/>
            <person name="McCullagh B."/>
            <person name="Robben J."/>
            <person name="Grymonprez B."/>
            <person name="Zimmermann W."/>
            <person name="Ramsperger U."/>
            <person name="Wedler H."/>
            <person name="Balke K."/>
            <person name="Wedler E."/>
            <person name="Peters S."/>
            <person name="van Staveren M."/>
            <person name="Dirkse W."/>
            <person name="Mooijman P."/>
            <person name="Klein Lankhorst R."/>
            <person name="Weitzenegger T."/>
            <person name="Bothe G."/>
            <person name="Rose M."/>
            <person name="Hauf J."/>
            <person name="Berneiser S."/>
            <person name="Hempel S."/>
            <person name="Feldpausch M."/>
            <person name="Lamberth S."/>
            <person name="Villarroel R."/>
            <person name="Gielen J."/>
            <person name="Ardiles W."/>
            <person name="Bents O."/>
            <person name="Lemcke K."/>
            <person name="Kolesov G."/>
            <person name="Mayer K.F.X."/>
            <person name="Rudd S."/>
            <person name="Schoof H."/>
            <person name="Schueller C."/>
            <person name="Zaccaria P."/>
            <person name="Mewes H.-W."/>
            <person name="Bevan M."/>
            <person name="Fransz P.F."/>
        </authorList>
    </citation>
    <scope>NUCLEOTIDE SEQUENCE [LARGE SCALE GENOMIC DNA]</scope>
    <source>
        <strain>cv. Columbia</strain>
    </source>
</reference>
<reference key="2">
    <citation type="journal article" date="2017" name="Plant J.">
        <title>Araport11: a complete reannotation of the Arabidopsis thaliana reference genome.</title>
        <authorList>
            <person name="Cheng C.Y."/>
            <person name="Krishnakumar V."/>
            <person name="Chan A.P."/>
            <person name="Thibaud-Nissen F."/>
            <person name="Schobel S."/>
            <person name="Town C.D."/>
        </authorList>
    </citation>
    <scope>GENOME REANNOTATION</scope>
    <source>
        <strain>cv. Columbia</strain>
    </source>
</reference>
<reference key="3">
    <citation type="journal article" date="2003" name="Science">
        <title>Empirical analysis of transcriptional activity in the Arabidopsis genome.</title>
        <authorList>
            <person name="Yamada K."/>
            <person name="Lim J."/>
            <person name="Dale J.M."/>
            <person name="Chen H."/>
            <person name="Shinn P."/>
            <person name="Palm C.J."/>
            <person name="Southwick A.M."/>
            <person name="Wu H.C."/>
            <person name="Kim C.J."/>
            <person name="Nguyen M."/>
            <person name="Pham P.K."/>
            <person name="Cheuk R.F."/>
            <person name="Karlin-Newmann G."/>
            <person name="Liu S.X."/>
            <person name="Lam B."/>
            <person name="Sakano H."/>
            <person name="Wu T."/>
            <person name="Yu G."/>
            <person name="Miranda M."/>
            <person name="Quach H.L."/>
            <person name="Tripp M."/>
            <person name="Chang C.H."/>
            <person name="Lee J.M."/>
            <person name="Toriumi M.J."/>
            <person name="Chan M.M."/>
            <person name="Tang C.C."/>
            <person name="Onodera C.S."/>
            <person name="Deng J.M."/>
            <person name="Akiyama K."/>
            <person name="Ansari Y."/>
            <person name="Arakawa T."/>
            <person name="Banh J."/>
            <person name="Banno F."/>
            <person name="Bowser L."/>
            <person name="Brooks S.Y."/>
            <person name="Carninci P."/>
            <person name="Chao Q."/>
            <person name="Choy N."/>
            <person name="Enju A."/>
            <person name="Goldsmith A.D."/>
            <person name="Gurjal M."/>
            <person name="Hansen N.F."/>
            <person name="Hayashizaki Y."/>
            <person name="Johnson-Hopson C."/>
            <person name="Hsuan V.W."/>
            <person name="Iida K."/>
            <person name="Karnes M."/>
            <person name="Khan S."/>
            <person name="Koesema E."/>
            <person name="Ishida J."/>
            <person name="Jiang P.X."/>
            <person name="Jones T."/>
            <person name="Kawai J."/>
            <person name="Kamiya A."/>
            <person name="Meyers C."/>
            <person name="Nakajima M."/>
            <person name="Narusaka M."/>
            <person name="Seki M."/>
            <person name="Sakurai T."/>
            <person name="Satou M."/>
            <person name="Tamse R."/>
            <person name="Vaysberg M."/>
            <person name="Wallender E.K."/>
            <person name="Wong C."/>
            <person name="Yamamura Y."/>
            <person name="Yuan S."/>
            <person name="Shinozaki K."/>
            <person name="Davis R.W."/>
            <person name="Theologis A."/>
            <person name="Ecker J.R."/>
        </authorList>
    </citation>
    <scope>NUCLEOTIDE SEQUENCE [LARGE SCALE MRNA]</scope>
    <source>
        <strain>cv. Columbia</strain>
    </source>
</reference>
<reference key="4">
    <citation type="journal article" date="2009" name="Plant Physiol.">
        <title>Large-scale Arabidopsis phosphoproteome profiling reveals novel chloroplast kinase substrates and phosphorylation networks.</title>
        <authorList>
            <person name="Reiland S."/>
            <person name="Messerli G."/>
            <person name="Baerenfaller K."/>
            <person name="Gerrits B."/>
            <person name="Endler A."/>
            <person name="Grossmann J."/>
            <person name="Gruissem W."/>
            <person name="Baginsky S."/>
        </authorList>
    </citation>
    <scope>PHOSPHORYLATION [LARGE SCALE ANALYSIS] AT SER-971</scope>
    <scope>IDENTIFICATION BY MASS SPECTROMETRY [LARGE SCALE ANALYSIS]</scope>
</reference>
<reference key="5">
    <citation type="journal article" date="2010" name="Plant Physiol.">
        <title>Tethering factors required for cytokinesis in Arabidopsis.</title>
        <authorList>
            <person name="Thellmann M."/>
            <person name="Rybak K."/>
            <person name="Thiele K."/>
            <person name="Wanner G."/>
            <person name="Assaad F.F."/>
        </authorList>
    </citation>
    <scope>FUNCTION</scope>
    <scope>COMPONENT OF THE TRAPPII COMPLEX</scope>
    <scope>DISRUPTION PHENOTYPE</scope>
</reference>
<reference key="6">
    <citation type="journal article" date="2011" name="Plant J.">
        <title>A specific role for Arabidopsis TRAPPII in post-Golgi trafficking that is crucial for cytokinesis and cell polarity.</title>
        <authorList>
            <person name="Qi X."/>
            <person name="Kaneda M."/>
            <person name="Chen J."/>
            <person name="Geitmann A."/>
            <person name="Zheng H."/>
        </authorList>
    </citation>
    <scope>FUNCTION</scope>
    <scope>DISRUPTION PHENOTYPE</scope>
</reference>
<reference key="7">
    <citation type="journal article" date="2014" name="Plant Cell Physiol.">
        <title>VAN4 encodes a putative TRS120 that is required for normal cell growth and vein development in Arabidopsis.</title>
        <authorList>
            <person name="Naramoto S."/>
            <person name="Nodzylski T."/>
            <person name="Dainobu T."/>
            <person name="Takatsuka H."/>
            <person name="Okada T."/>
            <person name="Friml J."/>
            <person name="Fukuda H."/>
        </authorList>
    </citation>
    <scope>FUNCTION</scope>
    <scope>SUBCELLULAR LOCATION</scope>
    <scope>TISSUE SPECIFICITY</scope>
</reference>